<proteinExistence type="inferred from homology"/>
<organism>
    <name type="scientific">Shigella boydii serotype 4 (strain Sb227)</name>
    <dbReference type="NCBI Taxonomy" id="300268"/>
    <lineage>
        <taxon>Bacteria</taxon>
        <taxon>Pseudomonadati</taxon>
        <taxon>Pseudomonadota</taxon>
        <taxon>Gammaproteobacteria</taxon>
        <taxon>Enterobacterales</taxon>
        <taxon>Enterobacteriaceae</taxon>
        <taxon>Shigella</taxon>
    </lineage>
</organism>
<reference key="1">
    <citation type="journal article" date="2005" name="Nucleic Acids Res.">
        <title>Genome dynamics and diversity of Shigella species, the etiologic agents of bacillary dysentery.</title>
        <authorList>
            <person name="Yang F."/>
            <person name="Yang J."/>
            <person name="Zhang X."/>
            <person name="Chen L."/>
            <person name="Jiang Y."/>
            <person name="Yan Y."/>
            <person name="Tang X."/>
            <person name="Wang J."/>
            <person name="Xiong Z."/>
            <person name="Dong J."/>
            <person name="Xue Y."/>
            <person name="Zhu Y."/>
            <person name="Xu X."/>
            <person name="Sun L."/>
            <person name="Chen S."/>
            <person name="Nie H."/>
            <person name="Peng J."/>
            <person name="Xu J."/>
            <person name="Wang Y."/>
            <person name="Yuan Z."/>
            <person name="Wen Y."/>
            <person name="Yao Z."/>
            <person name="Shen Y."/>
            <person name="Qiang B."/>
            <person name="Hou Y."/>
            <person name="Yu J."/>
            <person name="Jin Q."/>
        </authorList>
    </citation>
    <scope>NUCLEOTIDE SEQUENCE [LARGE SCALE GENOMIC DNA]</scope>
    <source>
        <strain>Sb227</strain>
    </source>
</reference>
<evidence type="ECO:0000255" key="1">
    <source>
        <dbReference type="HAMAP-Rule" id="MF_01115"/>
    </source>
</evidence>
<protein>
    <recommendedName>
        <fullName evidence="1">Putative ion-transport protein YfeO</fullName>
    </recommendedName>
</protein>
<accession>Q31Y82</accession>
<dbReference type="EMBL" id="CP000036">
    <property type="protein sequence ID" value="ABB66976.1"/>
    <property type="molecule type" value="Genomic_DNA"/>
</dbReference>
<dbReference type="RefSeq" id="WP_000903135.1">
    <property type="nucleotide sequence ID" value="NC_007613.1"/>
</dbReference>
<dbReference type="SMR" id="Q31Y82"/>
<dbReference type="KEGG" id="sbo:SBO_2415"/>
<dbReference type="HOGENOM" id="CLU_053130_0_0_6"/>
<dbReference type="Proteomes" id="UP000007067">
    <property type="component" value="Chromosome"/>
</dbReference>
<dbReference type="GO" id="GO:0005886">
    <property type="term" value="C:plasma membrane"/>
    <property type="evidence" value="ECO:0007669"/>
    <property type="project" value="UniProtKB-SubCell"/>
</dbReference>
<dbReference type="GO" id="GO:0015108">
    <property type="term" value="F:chloride transmembrane transporter activity"/>
    <property type="evidence" value="ECO:0007669"/>
    <property type="project" value="InterPro"/>
</dbReference>
<dbReference type="GO" id="GO:0005216">
    <property type="term" value="F:monoatomic ion channel activity"/>
    <property type="evidence" value="ECO:0007669"/>
    <property type="project" value="UniProtKB-UniRule"/>
</dbReference>
<dbReference type="CDD" id="cd00400">
    <property type="entry name" value="Voltage_gated_ClC"/>
    <property type="match status" value="1"/>
</dbReference>
<dbReference type="FunFam" id="1.10.3080.10:FF:000007">
    <property type="entry name" value="Putative ion-transport protein YfeO"/>
    <property type="match status" value="1"/>
</dbReference>
<dbReference type="Gene3D" id="1.10.3080.10">
    <property type="entry name" value="Clc chloride channel"/>
    <property type="match status" value="1"/>
</dbReference>
<dbReference type="HAMAP" id="MF_01115">
    <property type="entry name" value="CLC_YfeO"/>
    <property type="match status" value="1"/>
</dbReference>
<dbReference type="InterPro" id="IPR022969">
    <property type="entry name" value="Chloride_channel_YfeO"/>
</dbReference>
<dbReference type="InterPro" id="IPR014743">
    <property type="entry name" value="Cl-channel_core"/>
</dbReference>
<dbReference type="InterPro" id="IPR001807">
    <property type="entry name" value="ClC"/>
</dbReference>
<dbReference type="InterPro" id="IPR050368">
    <property type="entry name" value="ClC-type_chloride_channel"/>
</dbReference>
<dbReference type="NCBIfam" id="NF002971">
    <property type="entry name" value="PRK03655.1"/>
    <property type="match status" value="1"/>
</dbReference>
<dbReference type="PANTHER" id="PTHR43427">
    <property type="entry name" value="CHLORIDE CHANNEL PROTEIN CLC-E"/>
    <property type="match status" value="1"/>
</dbReference>
<dbReference type="PANTHER" id="PTHR43427:SF9">
    <property type="entry name" value="ION-TRANSPORT PROTEIN YFEO-RELATED"/>
    <property type="match status" value="1"/>
</dbReference>
<dbReference type="Pfam" id="PF00654">
    <property type="entry name" value="Voltage_CLC"/>
    <property type="match status" value="1"/>
</dbReference>
<dbReference type="PRINTS" id="PR00762">
    <property type="entry name" value="CLCHANNEL"/>
</dbReference>
<dbReference type="SUPFAM" id="SSF81340">
    <property type="entry name" value="Clc chloride channel"/>
    <property type="match status" value="1"/>
</dbReference>
<sequence>MLHPRARTMLLLSLPAVAIGIASSLILIVVMKIASVLQNLLWQRLPGTLGIAQDSPLWIIGVLTLTGIAVGLVIRFSQGHAGPDPACEPLIGAPVPPSALPGLIVALILGLAGGVSLGPEHPIMTINIALAVAIGARLLPRVNRMEWTILASAGTIGALFGTPVAAALIFSQTLNGSSEVPLWDRLFAPLMAAAAGALTTGLFFHPHFSLPIAHYGQMEMTDILSGAIVAAIAIAAGMVAVWCLPRLHAMMNQMKNPVLVLGIGGFILGILGVIGGPVSLFKGLDEMQQMVANQAFSTSDYFLLAVIKLAALVVAAASGFRGGRIFPAVFVGVALGLMLHEHVPAVPAAITVSCAILGIVLVVTRDGWLSLFMAAVVVPNTTLLPLLCIVMLPAWLLLAGKPMMMVNRPKQQPPHDNV</sequence>
<keyword id="KW-1003">Cell membrane</keyword>
<keyword id="KW-0407">Ion channel</keyword>
<keyword id="KW-0406">Ion transport</keyword>
<keyword id="KW-0472">Membrane</keyword>
<keyword id="KW-0812">Transmembrane</keyword>
<keyword id="KW-1133">Transmembrane helix</keyword>
<keyword id="KW-0813">Transport</keyword>
<gene>
    <name evidence="1" type="primary">yfeO</name>
    <name type="ordered locus">SBO_2415</name>
</gene>
<name>YFEO_SHIBS</name>
<feature type="chain" id="PRO_0000298435" description="Putative ion-transport protein YfeO">
    <location>
        <begin position="1"/>
        <end position="418"/>
    </location>
</feature>
<feature type="transmembrane region" description="Helical" evidence="1">
    <location>
        <begin position="10"/>
        <end position="30"/>
    </location>
</feature>
<feature type="transmembrane region" description="Helical" evidence="1">
    <location>
        <begin position="54"/>
        <end position="74"/>
    </location>
</feature>
<feature type="transmembrane region" description="Helical" evidence="1">
    <location>
        <begin position="99"/>
        <end position="119"/>
    </location>
</feature>
<feature type="transmembrane region" description="Helical" evidence="1">
    <location>
        <begin position="120"/>
        <end position="140"/>
    </location>
</feature>
<feature type="transmembrane region" description="Helical" evidence="1">
    <location>
        <begin position="149"/>
        <end position="169"/>
    </location>
</feature>
<feature type="transmembrane region" description="Helical" evidence="1">
    <location>
        <begin position="186"/>
        <end position="206"/>
    </location>
</feature>
<feature type="transmembrane region" description="Helical" evidence="1">
    <location>
        <begin position="223"/>
        <end position="243"/>
    </location>
</feature>
<feature type="transmembrane region" description="Helical" evidence="1">
    <location>
        <begin position="258"/>
        <end position="278"/>
    </location>
</feature>
<feature type="transmembrane region" description="Helical" evidence="1">
    <location>
        <begin position="300"/>
        <end position="320"/>
    </location>
</feature>
<feature type="transmembrane region" description="Helical" evidence="1">
    <location>
        <begin position="322"/>
        <end position="342"/>
    </location>
</feature>
<feature type="transmembrane region" description="Helical" evidence="1">
    <location>
        <begin position="343"/>
        <end position="363"/>
    </location>
</feature>
<feature type="transmembrane region" description="Helical" evidence="1">
    <location>
        <begin position="371"/>
        <end position="391"/>
    </location>
</feature>
<comment type="subcellular location">
    <subcellularLocation>
        <location evidence="1">Cell membrane</location>
        <topology evidence="1">Multi-pass membrane protein</topology>
    </subcellularLocation>
</comment>
<comment type="similarity">
    <text evidence="1">Belongs to the chloride channel (TC 2.A.49) family.</text>
</comment>